<accession>Q1IZA3</accession>
<organism>
    <name type="scientific">Deinococcus geothermalis (strain DSM 11300 / CIP 105573 / AG-3a)</name>
    <dbReference type="NCBI Taxonomy" id="319795"/>
    <lineage>
        <taxon>Bacteria</taxon>
        <taxon>Thermotogati</taxon>
        <taxon>Deinococcota</taxon>
        <taxon>Deinococci</taxon>
        <taxon>Deinococcales</taxon>
        <taxon>Deinococcaceae</taxon>
        <taxon>Deinococcus</taxon>
    </lineage>
</organism>
<evidence type="ECO:0000255" key="1">
    <source>
        <dbReference type="HAMAP-Rule" id="MF_00145"/>
    </source>
</evidence>
<name>PGK_DEIGD</name>
<dbReference type="EC" id="2.7.2.3" evidence="1"/>
<dbReference type="EMBL" id="CP000359">
    <property type="protein sequence ID" value="ABF45431.1"/>
    <property type="molecule type" value="Genomic_DNA"/>
</dbReference>
<dbReference type="RefSeq" id="WP_011530268.1">
    <property type="nucleotide sequence ID" value="NC_008025.1"/>
</dbReference>
<dbReference type="SMR" id="Q1IZA3"/>
<dbReference type="STRING" id="319795.Dgeo_1134"/>
<dbReference type="KEGG" id="dge:Dgeo_1134"/>
<dbReference type="eggNOG" id="COG0126">
    <property type="taxonomic scope" value="Bacteria"/>
</dbReference>
<dbReference type="HOGENOM" id="CLU_025427_0_2_0"/>
<dbReference type="UniPathway" id="UPA00109">
    <property type="reaction ID" value="UER00185"/>
</dbReference>
<dbReference type="Proteomes" id="UP000002431">
    <property type="component" value="Chromosome"/>
</dbReference>
<dbReference type="GO" id="GO:0005829">
    <property type="term" value="C:cytosol"/>
    <property type="evidence" value="ECO:0007669"/>
    <property type="project" value="TreeGrafter"/>
</dbReference>
<dbReference type="GO" id="GO:0043531">
    <property type="term" value="F:ADP binding"/>
    <property type="evidence" value="ECO:0007669"/>
    <property type="project" value="TreeGrafter"/>
</dbReference>
<dbReference type="GO" id="GO:0005524">
    <property type="term" value="F:ATP binding"/>
    <property type="evidence" value="ECO:0007669"/>
    <property type="project" value="UniProtKB-KW"/>
</dbReference>
<dbReference type="GO" id="GO:0004618">
    <property type="term" value="F:phosphoglycerate kinase activity"/>
    <property type="evidence" value="ECO:0007669"/>
    <property type="project" value="UniProtKB-UniRule"/>
</dbReference>
<dbReference type="GO" id="GO:0006094">
    <property type="term" value="P:gluconeogenesis"/>
    <property type="evidence" value="ECO:0007669"/>
    <property type="project" value="TreeGrafter"/>
</dbReference>
<dbReference type="GO" id="GO:0006096">
    <property type="term" value="P:glycolytic process"/>
    <property type="evidence" value="ECO:0007669"/>
    <property type="project" value="UniProtKB-UniRule"/>
</dbReference>
<dbReference type="CDD" id="cd00318">
    <property type="entry name" value="Phosphoglycerate_kinase"/>
    <property type="match status" value="1"/>
</dbReference>
<dbReference type="FunFam" id="3.40.50.1260:FF:000003">
    <property type="entry name" value="Phosphoglycerate kinase"/>
    <property type="match status" value="1"/>
</dbReference>
<dbReference type="FunFam" id="3.40.50.1260:FF:000006">
    <property type="entry name" value="Phosphoglycerate kinase"/>
    <property type="match status" value="1"/>
</dbReference>
<dbReference type="Gene3D" id="3.40.50.1260">
    <property type="entry name" value="Phosphoglycerate kinase, N-terminal domain"/>
    <property type="match status" value="2"/>
</dbReference>
<dbReference type="HAMAP" id="MF_00145">
    <property type="entry name" value="Phosphoglyc_kinase"/>
    <property type="match status" value="1"/>
</dbReference>
<dbReference type="InterPro" id="IPR001576">
    <property type="entry name" value="Phosphoglycerate_kinase"/>
</dbReference>
<dbReference type="InterPro" id="IPR015911">
    <property type="entry name" value="Phosphoglycerate_kinase_CS"/>
</dbReference>
<dbReference type="InterPro" id="IPR015824">
    <property type="entry name" value="Phosphoglycerate_kinase_N"/>
</dbReference>
<dbReference type="InterPro" id="IPR036043">
    <property type="entry name" value="Phosphoglycerate_kinase_sf"/>
</dbReference>
<dbReference type="PANTHER" id="PTHR11406">
    <property type="entry name" value="PHOSPHOGLYCERATE KINASE"/>
    <property type="match status" value="1"/>
</dbReference>
<dbReference type="PANTHER" id="PTHR11406:SF23">
    <property type="entry name" value="PHOSPHOGLYCERATE KINASE 1, CHLOROPLASTIC-RELATED"/>
    <property type="match status" value="1"/>
</dbReference>
<dbReference type="Pfam" id="PF00162">
    <property type="entry name" value="PGK"/>
    <property type="match status" value="1"/>
</dbReference>
<dbReference type="PIRSF" id="PIRSF000724">
    <property type="entry name" value="Pgk"/>
    <property type="match status" value="1"/>
</dbReference>
<dbReference type="PRINTS" id="PR00477">
    <property type="entry name" value="PHGLYCKINASE"/>
</dbReference>
<dbReference type="SUPFAM" id="SSF53748">
    <property type="entry name" value="Phosphoglycerate kinase"/>
    <property type="match status" value="1"/>
</dbReference>
<dbReference type="PROSITE" id="PS00111">
    <property type="entry name" value="PGLYCERATE_KINASE"/>
    <property type="match status" value="1"/>
</dbReference>
<protein>
    <recommendedName>
        <fullName evidence="1">Phosphoglycerate kinase</fullName>
        <ecNumber evidence="1">2.7.2.3</ecNumber>
    </recommendedName>
</protein>
<gene>
    <name evidence="1" type="primary">pgk</name>
    <name type="ordered locus">Dgeo_1134</name>
</gene>
<proteinExistence type="inferred from homology"/>
<sequence>MQTLDQLDVNGKRVLVRVDYNVPIKDGVVQDETRVTASLPTLQHLLARGAALVLLSHLGRPKNGPEEKYSLRPVAAVLERALGRPVKFIASLPSSEETRRAVESLQPGEVALLENVRFEPGEEKNDPELVEQLARLGDAFVLDAFGSAHRAHASVSGVAGRLPHAAGLLLHNEVEALSRLLHDPARPYVVIIGGAKVSDKIKVIENLLPRVDRMLIGGGMMFTFIRARGGQIGNSLVEEDQVAYARQLLEQYGDRLMLPTDAVAADRFAPDAQTRVVPADRIPDGWMGLDIGPETARAYAEALQGAKTVFWNGPMGVFEFPAFAAGTNAVAQAVAELGNQAYTVVGGGDSVSAINQSGQASKVSHISTGGGASLELLEGQLLPGVEAMK</sequence>
<reference key="1">
    <citation type="submission" date="2006-04" db="EMBL/GenBank/DDBJ databases">
        <title>Complete sequence of chromosome of Deinococcus geothermalis DSM 11300.</title>
        <authorList>
            <person name="Copeland A."/>
            <person name="Lucas S."/>
            <person name="Lapidus A."/>
            <person name="Barry K."/>
            <person name="Detter J.C."/>
            <person name="Glavina del Rio T."/>
            <person name="Hammon N."/>
            <person name="Israni S."/>
            <person name="Dalin E."/>
            <person name="Tice H."/>
            <person name="Pitluck S."/>
            <person name="Brettin T."/>
            <person name="Bruce D."/>
            <person name="Han C."/>
            <person name="Tapia R."/>
            <person name="Saunders E."/>
            <person name="Gilna P."/>
            <person name="Schmutz J."/>
            <person name="Larimer F."/>
            <person name="Land M."/>
            <person name="Hauser L."/>
            <person name="Kyrpides N."/>
            <person name="Kim E."/>
            <person name="Daly M.J."/>
            <person name="Fredrickson J.K."/>
            <person name="Makarova K.S."/>
            <person name="Gaidamakova E.K."/>
            <person name="Zhai M."/>
            <person name="Richardson P."/>
        </authorList>
    </citation>
    <scope>NUCLEOTIDE SEQUENCE [LARGE SCALE GENOMIC DNA]</scope>
    <source>
        <strain>DSM 11300 / CIP 105573 / AG-3a</strain>
    </source>
</reference>
<feature type="chain" id="PRO_1000096336" description="Phosphoglycerate kinase">
    <location>
        <begin position="1"/>
        <end position="389"/>
    </location>
</feature>
<feature type="binding site" evidence="1">
    <location>
        <begin position="19"/>
        <end position="21"/>
    </location>
    <ligand>
        <name>substrate</name>
    </ligand>
</feature>
<feature type="binding site" evidence="1">
    <location>
        <position position="34"/>
    </location>
    <ligand>
        <name>substrate</name>
    </ligand>
</feature>
<feature type="binding site" evidence="1">
    <location>
        <begin position="57"/>
        <end position="60"/>
    </location>
    <ligand>
        <name>substrate</name>
    </ligand>
</feature>
<feature type="binding site" evidence="1">
    <location>
        <position position="117"/>
    </location>
    <ligand>
        <name>substrate</name>
    </ligand>
</feature>
<feature type="binding site" evidence="1">
    <location>
        <position position="150"/>
    </location>
    <ligand>
        <name>substrate</name>
    </ligand>
</feature>
<feature type="binding site" evidence="1">
    <location>
        <position position="200"/>
    </location>
    <ligand>
        <name>ATP</name>
        <dbReference type="ChEBI" id="CHEBI:30616"/>
    </ligand>
</feature>
<feature type="binding site" evidence="1">
    <location>
        <position position="288"/>
    </location>
    <ligand>
        <name>ATP</name>
        <dbReference type="ChEBI" id="CHEBI:30616"/>
    </ligand>
</feature>
<feature type="binding site" evidence="1">
    <location>
        <position position="319"/>
    </location>
    <ligand>
        <name>ATP</name>
        <dbReference type="ChEBI" id="CHEBI:30616"/>
    </ligand>
</feature>
<feature type="binding site" evidence="1">
    <location>
        <begin position="347"/>
        <end position="350"/>
    </location>
    <ligand>
        <name>ATP</name>
        <dbReference type="ChEBI" id="CHEBI:30616"/>
    </ligand>
</feature>
<comment type="catalytic activity">
    <reaction evidence="1">
        <text>(2R)-3-phosphoglycerate + ATP = (2R)-3-phospho-glyceroyl phosphate + ADP</text>
        <dbReference type="Rhea" id="RHEA:14801"/>
        <dbReference type="ChEBI" id="CHEBI:30616"/>
        <dbReference type="ChEBI" id="CHEBI:57604"/>
        <dbReference type="ChEBI" id="CHEBI:58272"/>
        <dbReference type="ChEBI" id="CHEBI:456216"/>
        <dbReference type="EC" id="2.7.2.3"/>
    </reaction>
</comment>
<comment type="pathway">
    <text evidence="1">Carbohydrate degradation; glycolysis; pyruvate from D-glyceraldehyde 3-phosphate: step 2/5.</text>
</comment>
<comment type="subunit">
    <text evidence="1">Monomer.</text>
</comment>
<comment type="subcellular location">
    <subcellularLocation>
        <location evidence="1">Cytoplasm</location>
    </subcellularLocation>
</comment>
<comment type="similarity">
    <text evidence="1">Belongs to the phosphoglycerate kinase family.</text>
</comment>
<keyword id="KW-0067">ATP-binding</keyword>
<keyword id="KW-0963">Cytoplasm</keyword>
<keyword id="KW-0324">Glycolysis</keyword>
<keyword id="KW-0418">Kinase</keyword>
<keyword id="KW-0547">Nucleotide-binding</keyword>
<keyword id="KW-0808">Transferase</keyword>